<name>ENGB_PSEP7</name>
<sequence>MSEKNPIVGLCQKASFLISAAQVDQCPPDEGLEVAFAGRSNAGKSSALNTLTHANLARTSKTPGRTQLLNFFSLDESRRLVDLPGYGYAKVPIPLKQHWQRHLEAYLSSRESLAGVFLMMDIRHPLTDFDRLMLDWAQASQLPIHVLMTKADKLAFGAAKNALLKVRREVQQGWGDVASLQLFSAPKRQGVDEAQMVLAQWLGLLDEDEEPVGEA</sequence>
<feature type="chain" id="PRO_1000005839" description="Probable GTP-binding protein EngB">
    <location>
        <begin position="1"/>
        <end position="215"/>
    </location>
</feature>
<feature type="domain" description="EngB-type G" evidence="1">
    <location>
        <begin position="30"/>
        <end position="204"/>
    </location>
</feature>
<feature type="binding site" evidence="1">
    <location>
        <begin position="38"/>
        <end position="45"/>
    </location>
    <ligand>
        <name>GTP</name>
        <dbReference type="ChEBI" id="CHEBI:37565"/>
    </ligand>
</feature>
<feature type="binding site" evidence="1">
    <location>
        <position position="45"/>
    </location>
    <ligand>
        <name>Mg(2+)</name>
        <dbReference type="ChEBI" id="CHEBI:18420"/>
    </ligand>
</feature>
<feature type="binding site" evidence="1">
    <location>
        <begin position="64"/>
        <end position="68"/>
    </location>
    <ligand>
        <name>GTP</name>
        <dbReference type="ChEBI" id="CHEBI:37565"/>
    </ligand>
</feature>
<feature type="binding site" evidence="1">
    <location>
        <position position="66"/>
    </location>
    <ligand>
        <name>Mg(2+)</name>
        <dbReference type="ChEBI" id="CHEBI:18420"/>
    </ligand>
</feature>
<feature type="binding site" evidence="1">
    <location>
        <begin position="82"/>
        <end position="85"/>
    </location>
    <ligand>
        <name>GTP</name>
        <dbReference type="ChEBI" id="CHEBI:37565"/>
    </ligand>
</feature>
<feature type="binding site" evidence="1">
    <location>
        <begin position="149"/>
        <end position="152"/>
    </location>
    <ligand>
        <name>GTP</name>
        <dbReference type="ChEBI" id="CHEBI:37565"/>
    </ligand>
</feature>
<feature type="binding site" evidence="1">
    <location>
        <begin position="182"/>
        <end position="185"/>
    </location>
    <ligand>
        <name>GTP</name>
        <dbReference type="ChEBI" id="CHEBI:37565"/>
    </ligand>
</feature>
<accession>A6VEW7</accession>
<evidence type="ECO:0000255" key="1">
    <source>
        <dbReference type="HAMAP-Rule" id="MF_00321"/>
    </source>
</evidence>
<comment type="function">
    <text evidence="1">Necessary for normal cell division and for the maintenance of normal septation.</text>
</comment>
<comment type="cofactor">
    <cofactor evidence="1">
        <name>Mg(2+)</name>
        <dbReference type="ChEBI" id="CHEBI:18420"/>
    </cofactor>
</comment>
<comment type="similarity">
    <text evidence="1">Belongs to the TRAFAC class TrmE-Era-EngA-EngB-Septin-like GTPase superfamily. EngB GTPase family.</text>
</comment>
<keyword id="KW-0131">Cell cycle</keyword>
<keyword id="KW-0132">Cell division</keyword>
<keyword id="KW-0342">GTP-binding</keyword>
<keyword id="KW-0460">Magnesium</keyword>
<keyword id="KW-0479">Metal-binding</keyword>
<keyword id="KW-0547">Nucleotide-binding</keyword>
<keyword id="KW-0717">Septation</keyword>
<proteinExistence type="inferred from homology"/>
<dbReference type="EMBL" id="CP000744">
    <property type="protein sequence ID" value="ABR85871.1"/>
    <property type="molecule type" value="Genomic_DNA"/>
</dbReference>
<dbReference type="RefSeq" id="WP_012078054.1">
    <property type="nucleotide sequence ID" value="NC_009656.1"/>
</dbReference>
<dbReference type="SMR" id="A6VEW7"/>
<dbReference type="GeneID" id="77224039"/>
<dbReference type="KEGG" id="pap:PSPA7_6291"/>
<dbReference type="HOGENOM" id="CLU_033732_1_0_6"/>
<dbReference type="Proteomes" id="UP000001582">
    <property type="component" value="Chromosome"/>
</dbReference>
<dbReference type="GO" id="GO:0005829">
    <property type="term" value="C:cytosol"/>
    <property type="evidence" value="ECO:0007669"/>
    <property type="project" value="TreeGrafter"/>
</dbReference>
<dbReference type="GO" id="GO:0005525">
    <property type="term" value="F:GTP binding"/>
    <property type="evidence" value="ECO:0007669"/>
    <property type="project" value="UniProtKB-UniRule"/>
</dbReference>
<dbReference type="GO" id="GO:0046872">
    <property type="term" value="F:metal ion binding"/>
    <property type="evidence" value="ECO:0007669"/>
    <property type="project" value="UniProtKB-KW"/>
</dbReference>
<dbReference type="GO" id="GO:0000917">
    <property type="term" value="P:division septum assembly"/>
    <property type="evidence" value="ECO:0007669"/>
    <property type="project" value="UniProtKB-KW"/>
</dbReference>
<dbReference type="CDD" id="cd01876">
    <property type="entry name" value="YihA_EngB"/>
    <property type="match status" value="1"/>
</dbReference>
<dbReference type="FunFam" id="3.40.50.300:FF:000098">
    <property type="entry name" value="Probable GTP-binding protein EngB"/>
    <property type="match status" value="1"/>
</dbReference>
<dbReference type="Gene3D" id="3.40.50.300">
    <property type="entry name" value="P-loop containing nucleotide triphosphate hydrolases"/>
    <property type="match status" value="1"/>
</dbReference>
<dbReference type="HAMAP" id="MF_00321">
    <property type="entry name" value="GTPase_EngB"/>
    <property type="match status" value="1"/>
</dbReference>
<dbReference type="InterPro" id="IPR030393">
    <property type="entry name" value="G_ENGB_dom"/>
</dbReference>
<dbReference type="InterPro" id="IPR006073">
    <property type="entry name" value="GTP-bd"/>
</dbReference>
<dbReference type="InterPro" id="IPR019987">
    <property type="entry name" value="GTP-bd_ribosome_bio_YsxC"/>
</dbReference>
<dbReference type="InterPro" id="IPR027417">
    <property type="entry name" value="P-loop_NTPase"/>
</dbReference>
<dbReference type="NCBIfam" id="TIGR03598">
    <property type="entry name" value="GTPase_YsxC"/>
    <property type="match status" value="1"/>
</dbReference>
<dbReference type="PANTHER" id="PTHR11649:SF13">
    <property type="entry name" value="ENGB-TYPE G DOMAIN-CONTAINING PROTEIN"/>
    <property type="match status" value="1"/>
</dbReference>
<dbReference type="PANTHER" id="PTHR11649">
    <property type="entry name" value="MSS1/TRME-RELATED GTP-BINDING PROTEIN"/>
    <property type="match status" value="1"/>
</dbReference>
<dbReference type="Pfam" id="PF01926">
    <property type="entry name" value="MMR_HSR1"/>
    <property type="match status" value="1"/>
</dbReference>
<dbReference type="SUPFAM" id="SSF52540">
    <property type="entry name" value="P-loop containing nucleoside triphosphate hydrolases"/>
    <property type="match status" value="1"/>
</dbReference>
<dbReference type="PROSITE" id="PS51706">
    <property type="entry name" value="G_ENGB"/>
    <property type="match status" value="1"/>
</dbReference>
<reference key="1">
    <citation type="submission" date="2007-06" db="EMBL/GenBank/DDBJ databases">
        <authorList>
            <person name="Dodson R.J."/>
            <person name="Harkins D."/>
            <person name="Paulsen I.T."/>
        </authorList>
    </citation>
    <scope>NUCLEOTIDE SEQUENCE [LARGE SCALE GENOMIC DNA]</scope>
    <source>
        <strain>DSM 24068 / PA7</strain>
    </source>
</reference>
<gene>
    <name evidence="1" type="primary">engB</name>
    <name type="ordered locus">PSPA7_6291</name>
</gene>
<organism>
    <name type="scientific">Pseudomonas paraeruginosa (strain DSM 24068 / PA7)</name>
    <name type="common">Pseudomonas aeruginosa (strain PA7)</name>
    <dbReference type="NCBI Taxonomy" id="381754"/>
    <lineage>
        <taxon>Bacteria</taxon>
        <taxon>Pseudomonadati</taxon>
        <taxon>Pseudomonadota</taxon>
        <taxon>Gammaproteobacteria</taxon>
        <taxon>Pseudomonadales</taxon>
        <taxon>Pseudomonadaceae</taxon>
        <taxon>Pseudomonas</taxon>
        <taxon>Pseudomonas paraeruginosa</taxon>
    </lineage>
</organism>
<protein>
    <recommendedName>
        <fullName evidence="1">Probable GTP-binding protein EngB</fullName>
    </recommendedName>
</protein>